<sequence>MNDMTNIMKKAKEMQQKMQQIQDEMVNLKVTGTAGGGLVSITLNGQNIISEVKIDPSLIKPEESEILEDLIMAAHNEAKEKISTAMAEKTQNITAGLPIPPGFKLPFS</sequence>
<feature type="chain" id="PRO_1000003688" description="Nucleoid-associated protein BARBAKC583_1239">
    <location>
        <begin position="1"/>
        <end position="108"/>
    </location>
</feature>
<reference key="1">
    <citation type="submission" date="2006-12" db="EMBL/GenBank/DDBJ databases">
        <authorList>
            <person name="Hendrix L."/>
            <person name="Mohamoud Y."/>
            <person name="Radune D."/>
            <person name="Shvartsbeyn A."/>
            <person name="Daugherty S."/>
            <person name="Dodson R."/>
            <person name="Durkin A.S."/>
            <person name="Harkins D."/>
            <person name="Huot H."/>
            <person name="Kothari S.P."/>
            <person name="Madupu R."/>
            <person name="Li J."/>
            <person name="Nelson W.C."/>
            <person name="Shrivastava S."/>
            <person name="Giglio M.G."/>
            <person name="Haft D."/>
            <person name="Selengut J."/>
            <person name="Fraser-Ligget C."/>
            <person name="Seshadri R."/>
        </authorList>
    </citation>
    <scope>NUCLEOTIDE SEQUENCE [LARGE SCALE GENOMIC DNA]</scope>
    <source>
        <strain>ATCC 35685 / KC583 / Herrer 020/F12,63</strain>
    </source>
</reference>
<name>Y1239_BARBK</name>
<dbReference type="EMBL" id="CP000524">
    <property type="protein sequence ID" value="ABM45670.1"/>
    <property type="molecule type" value="Genomic_DNA"/>
</dbReference>
<dbReference type="RefSeq" id="WP_005767949.1">
    <property type="nucleotide sequence ID" value="NC_008783.1"/>
</dbReference>
<dbReference type="SMR" id="A1UU35"/>
<dbReference type="STRING" id="360095.BARBAKC583_1239"/>
<dbReference type="GeneID" id="4684121"/>
<dbReference type="KEGG" id="bbk:BARBAKC583_1239"/>
<dbReference type="PATRIC" id="fig|360095.6.peg.1215"/>
<dbReference type="eggNOG" id="COG0718">
    <property type="taxonomic scope" value="Bacteria"/>
</dbReference>
<dbReference type="HOGENOM" id="CLU_140930_0_1_5"/>
<dbReference type="OrthoDB" id="9803080at2"/>
<dbReference type="Proteomes" id="UP000000643">
    <property type="component" value="Chromosome"/>
</dbReference>
<dbReference type="GO" id="GO:0043590">
    <property type="term" value="C:bacterial nucleoid"/>
    <property type="evidence" value="ECO:0007669"/>
    <property type="project" value="UniProtKB-UniRule"/>
</dbReference>
<dbReference type="GO" id="GO:0005829">
    <property type="term" value="C:cytosol"/>
    <property type="evidence" value="ECO:0007669"/>
    <property type="project" value="TreeGrafter"/>
</dbReference>
<dbReference type="GO" id="GO:0003677">
    <property type="term" value="F:DNA binding"/>
    <property type="evidence" value="ECO:0007669"/>
    <property type="project" value="UniProtKB-UniRule"/>
</dbReference>
<dbReference type="Gene3D" id="3.30.1310.10">
    <property type="entry name" value="Nucleoid-associated protein YbaB-like domain"/>
    <property type="match status" value="1"/>
</dbReference>
<dbReference type="HAMAP" id="MF_00274">
    <property type="entry name" value="DNA_YbaB_EbfC"/>
    <property type="match status" value="1"/>
</dbReference>
<dbReference type="InterPro" id="IPR036894">
    <property type="entry name" value="YbaB-like_sf"/>
</dbReference>
<dbReference type="InterPro" id="IPR004401">
    <property type="entry name" value="YbaB/EbfC"/>
</dbReference>
<dbReference type="NCBIfam" id="TIGR00103">
    <property type="entry name" value="DNA_YbaB_EbfC"/>
    <property type="match status" value="1"/>
</dbReference>
<dbReference type="PANTHER" id="PTHR33449">
    <property type="entry name" value="NUCLEOID-ASSOCIATED PROTEIN YBAB"/>
    <property type="match status" value="1"/>
</dbReference>
<dbReference type="PANTHER" id="PTHR33449:SF1">
    <property type="entry name" value="NUCLEOID-ASSOCIATED PROTEIN YBAB"/>
    <property type="match status" value="1"/>
</dbReference>
<dbReference type="Pfam" id="PF02575">
    <property type="entry name" value="YbaB_DNA_bd"/>
    <property type="match status" value="1"/>
</dbReference>
<dbReference type="PIRSF" id="PIRSF004555">
    <property type="entry name" value="UCP004555"/>
    <property type="match status" value="1"/>
</dbReference>
<dbReference type="SUPFAM" id="SSF82607">
    <property type="entry name" value="YbaB-like"/>
    <property type="match status" value="1"/>
</dbReference>
<evidence type="ECO:0000255" key="1">
    <source>
        <dbReference type="HAMAP-Rule" id="MF_00274"/>
    </source>
</evidence>
<organism>
    <name type="scientific">Bartonella bacilliformis (strain ATCC 35685 / KC583 / Herrer 020/F12,63)</name>
    <dbReference type="NCBI Taxonomy" id="360095"/>
    <lineage>
        <taxon>Bacteria</taxon>
        <taxon>Pseudomonadati</taxon>
        <taxon>Pseudomonadota</taxon>
        <taxon>Alphaproteobacteria</taxon>
        <taxon>Hyphomicrobiales</taxon>
        <taxon>Bartonellaceae</taxon>
        <taxon>Bartonella</taxon>
    </lineage>
</organism>
<protein>
    <recommendedName>
        <fullName evidence="1">Nucleoid-associated protein BARBAKC583_1239</fullName>
    </recommendedName>
</protein>
<keyword id="KW-0963">Cytoplasm</keyword>
<keyword id="KW-0238">DNA-binding</keyword>
<accession>A1UU35</accession>
<gene>
    <name type="ordered locus">BARBAKC583_1239</name>
</gene>
<proteinExistence type="inferred from homology"/>
<comment type="function">
    <text evidence="1">Binds to DNA and alters its conformation. May be involved in regulation of gene expression, nucleoid organization and DNA protection.</text>
</comment>
<comment type="subunit">
    <text evidence="1">Homodimer.</text>
</comment>
<comment type="subcellular location">
    <subcellularLocation>
        <location evidence="1">Cytoplasm</location>
        <location evidence="1">Nucleoid</location>
    </subcellularLocation>
</comment>
<comment type="similarity">
    <text evidence="1">Belongs to the YbaB/EbfC family.</text>
</comment>